<gene>
    <name type="primary">ATG8</name>
    <name type="ordered locus">CNA07930</name>
</gene>
<feature type="chain" id="PRO_0000017214" description="Autophagy-related protein 8">
    <location>
        <begin position="1"/>
        <end position="117"/>
    </location>
</feature>
<feature type="propeptide" id="PRO_0000017215" description="Removed in mature form" evidence="1">
    <location>
        <begin position="118"/>
        <end position="126"/>
    </location>
</feature>
<feature type="region of interest" description="Disordered" evidence="2">
    <location>
        <begin position="1"/>
        <end position="20"/>
    </location>
</feature>
<feature type="site" description="Cleavage; by ATG4" evidence="1">
    <location>
        <begin position="117"/>
        <end position="118"/>
    </location>
</feature>
<feature type="lipid moiety-binding region" description="Phosphatidylethanolamine amidated glycine" evidence="1">
    <location>
        <position position="117"/>
    </location>
</feature>
<proteinExistence type="inferred from homology"/>
<sequence>MVRSKFKDEHPFDKRKAEAERIRQKYQDRIPVICEKAEKSDIPTIDKKKYLVPADLTVGQFVYVIRKRIKLAPEKAIFIFVDDILPPTAALMSSIYDEHKDEDGFLYVLYASENTFGDLEQYAISE</sequence>
<accession>P0CO54</accession>
<accession>Q55YQ9</accession>
<accession>Q5KN30</accession>
<dbReference type="EMBL" id="AE017341">
    <property type="protein sequence ID" value="AAW41320.1"/>
    <property type="molecule type" value="Genomic_DNA"/>
</dbReference>
<dbReference type="RefSeq" id="XP_567139.1">
    <property type="nucleotide sequence ID" value="XM_567139.1"/>
</dbReference>
<dbReference type="SMR" id="P0CO54"/>
<dbReference type="FunCoup" id="P0CO54">
    <property type="interactions" value="271"/>
</dbReference>
<dbReference type="STRING" id="214684.P0CO54"/>
<dbReference type="PaxDb" id="214684-P0CO54"/>
<dbReference type="EnsemblFungi" id="AAW41320">
    <property type="protein sequence ID" value="AAW41320"/>
    <property type="gene ID" value="CNA07930"/>
</dbReference>
<dbReference type="GeneID" id="3253893"/>
<dbReference type="KEGG" id="cne:CNA07930"/>
<dbReference type="VEuPathDB" id="FungiDB:CNA07930"/>
<dbReference type="eggNOG" id="KOG1654">
    <property type="taxonomic scope" value="Eukaryota"/>
</dbReference>
<dbReference type="HOGENOM" id="CLU_119276_0_1_1"/>
<dbReference type="InParanoid" id="P0CO54"/>
<dbReference type="OMA" id="AVYQEHK"/>
<dbReference type="OrthoDB" id="6738456at2759"/>
<dbReference type="PHI-base" id="PHI:9137"/>
<dbReference type="Proteomes" id="UP000002149">
    <property type="component" value="Chromosome 1"/>
</dbReference>
<dbReference type="GO" id="GO:0000421">
    <property type="term" value="C:autophagosome membrane"/>
    <property type="evidence" value="ECO:0000318"/>
    <property type="project" value="GO_Central"/>
</dbReference>
<dbReference type="GO" id="GO:0031410">
    <property type="term" value="C:cytoplasmic vesicle"/>
    <property type="evidence" value="ECO:0007669"/>
    <property type="project" value="UniProtKB-KW"/>
</dbReference>
<dbReference type="GO" id="GO:0000329">
    <property type="term" value="C:fungal-type vacuole membrane"/>
    <property type="evidence" value="ECO:0000318"/>
    <property type="project" value="GO_Central"/>
</dbReference>
<dbReference type="GO" id="GO:0008429">
    <property type="term" value="F:phosphatidylethanolamine binding"/>
    <property type="evidence" value="ECO:0000318"/>
    <property type="project" value="GO_Central"/>
</dbReference>
<dbReference type="GO" id="GO:0000045">
    <property type="term" value="P:autophagosome assembly"/>
    <property type="evidence" value="ECO:0000318"/>
    <property type="project" value="GO_Central"/>
</dbReference>
<dbReference type="GO" id="GO:0097352">
    <property type="term" value="P:autophagosome maturation"/>
    <property type="evidence" value="ECO:0000318"/>
    <property type="project" value="GO_Central"/>
</dbReference>
<dbReference type="GO" id="GO:0006995">
    <property type="term" value="P:cellular response to nitrogen starvation"/>
    <property type="evidence" value="ECO:0000318"/>
    <property type="project" value="GO_Central"/>
</dbReference>
<dbReference type="GO" id="GO:0000423">
    <property type="term" value="P:mitophagy"/>
    <property type="evidence" value="ECO:0000318"/>
    <property type="project" value="GO_Central"/>
</dbReference>
<dbReference type="GO" id="GO:0015031">
    <property type="term" value="P:protein transport"/>
    <property type="evidence" value="ECO:0007669"/>
    <property type="project" value="UniProtKB-KW"/>
</dbReference>
<dbReference type="CDD" id="cd16128">
    <property type="entry name" value="Ubl_ATG8"/>
    <property type="match status" value="1"/>
</dbReference>
<dbReference type="FunFam" id="3.10.20.90:FF:000010">
    <property type="entry name" value="Autophagy-related protein"/>
    <property type="match status" value="1"/>
</dbReference>
<dbReference type="Gene3D" id="3.10.20.90">
    <property type="entry name" value="Phosphatidylinositol 3-kinase Catalytic Subunit, Chain A, domain 1"/>
    <property type="match status" value="1"/>
</dbReference>
<dbReference type="InterPro" id="IPR004241">
    <property type="entry name" value="Atg8-like"/>
</dbReference>
<dbReference type="InterPro" id="IPR029071">
    <property type="entry name" value="Ubiquitin-like_domsf"/>
</dbReference>
<dbReference type="PANTHER" id="PTHR10969">
    <property type="entry name" value="MICROTUBULE-ASSOCIATED PROTEINS 1A/1B LIGHT CHAIN 3-RELATED"/>
    <property type="match status" value="1"/>
</dbReference>
<dbReference type="Pfam" id="PF02991">
    <property type="entry name" value="ATG8"/>
    <property type="match status" value="1"/>
</dbReference>
<dbReference type="SUPFAM" id="SSF54236">
    <property type="entry name" value="Ubiquitin-like"/>
    <property type="match status" value="1"/>
</dbReference>
<reference key="1">
    <citation type="journal article" date="2005" name="Science">
        <title>The genome of the basidiomycetous yeast and human pathogen Cryptococcus neoformans.</title>
        <authorList>
            <person name="Loftus B.J."/>
            <person name="Fung E."/>
            <person name="Roncaglia P."/>
            <person name="Rowley D."/>
            <person name="Amedeo P."/>
            <person name="Bruno D."/>
            <person name="Vamathevan J."/>
            <person name="Miranda M."/>
            <person name="Anderson I.J."/>
            <person name="Fraser J.A."/>
            <person name="Allen J.E."/>
            <person name="Bosdet I.E."/>
            <person name="Brent M.R."/>
            <person name="Chiu R."/>
            <person name="Doering T.L."/>
            <person name="Donlin M.J."/>
            <person name="D'Souza C.A."/>
            <person name="Fox D.S."/>
            <person name="Grinberg V."/>
            <person name="Fu J."/>
            <person name="Fukushima M."/>
            <person name="Haas B.J."/>
            <person name="Huang J.C."/>
            <person name="Janbon G."/>
            <person name="Jones S.J.M."/>
            <person name="Koo H.L."/>
            <person name="Krzywinski M.I."/>
            <person name="Kwon-Chung K.J."/>
            <person name="Lengeler K.B."/>
            <person name="Maiti R."/>
            <person name="Marra M.A."/>
            <person name="Marra R.E."/>
            <person name="Mathewson C.A."/>
            <person name="Mitchell T.G."/>
            <person name="Pertea M."/>
            <person name="Riggs F.R."/>
            <person name="Salzberg S.L."/>
            <person name="Schein J.E."/>
            <person name="Shvartsbeyn A."/>
            <person name="Shin H."/>
            <person name="Shumway M."/>
            <person name="Specht C.A."/>
            <person name="Suh B.B."/>
            <person name="Tenney A."/>
            <person name="Utterback T.R."/>
            <person name="Wickes B.L."/>
            <person name="Wortman J.R."/>
            <person name="Wye N.H."/>
            <person name="Kronstad J.W."/>
            <person name="Lodge J.K."/>
            <person name="Heitman J."/>
            <person name="Davis R.W."/>
            <person name="Fraser C.M."/>
            <person name="Hyman R.W."/>
        </authorList>
    </citation>
    <scope>NUCLEOTIDE SEQUENCE [LARGE SCALE GENOMIC DNA]</scope>
    <source>
        <strain>JEC21 / ATCC MYA-565</strain>
    </source>
</reference>
<evidence type="ECO:0000250" key="1">
    <source>
        <dbReference type="UniProtKB" id="P38182"/>
    </source>
</evidence>
<evidence type="ECO:0000256" key="2">
    <source>
        <dbReference type="SAM" id="MobiDB-lite"/>
    </source>
</evidence>
<evidence type="ECO:0000305" key="3"/>
<comment type="function">
    <text evidence="1">Ubiquitin-like modifier involved in autophagosome formation. With ATG4, mediates the delivery of the autophagosomes to the vacuole via the microtubule cytoskeleton. Required for selective autophagic degradation of the nucleus (nucleophagy) as well as for mitophagy which contributes to regulate mitochondrial quantity and quality by eliminating the mitochondria to a basal level to fulfill cellular energy requirements and preventing excess ROS production. Participates also in membrane fusion events that take place in the early secretory pathway. Also involved in endoplasmic reticulum-specific autophagic process and is essential for the survival of cells subjected to severe ER stress. The ATG8-PE conjugate mediates tethering between adjacent membranes and stimulates membrane hemifusion, leading to expansion of the autophagosomal membrane during autophagy.</text>
</comment>
<comment type="subcellular location">
    <subcellularLocation>
        <location evidence="1">Cytoplasmic vesicle</location>
        <location evidence="1">Autophagosome membrane</location>
        <topology evidence="1">Lipid-anchor</topology>
    </subcellularLocation>
    <subcellularLocation>
        <location evidence="1">Vacuole membrane</location>
        <topology evidence="1">Lipid-anchor</topology>
    </subcellularLocation>
</comment>
<comment type="PTM">
    <text evidence="1">The C-terminal 9 residues are removed to expose Gly-117 at the C-terminus. The C-terminal Gly is then amidated with phosphatidylethanolamine by an activating system similar to that for ubiquitin.</text>
</comment>
<comment type="similarity">
    <text evidence="3">Belongs to the ATG8 family.</text>
</comment>
<protein>
    <recommendedName>
        <fullName>Autophagy-related protein 8</fullName>
    </recommendedName>
    <alternativeName>
        <fullName>Autophagy-related ubiquitin-like modifier ATG8</fullName>
    </alternativeName>
</protein>
<organism>
    <name type="scientific">Cryptococcus neoformans var. neoformans serotype D (strain JEC21 / ATCC MYA-565)</name>
    <name type="common">Filobasidiella neoformans</name>
    <dbReference type="NCBI Taxonomy" id="214684"/>
    <lineage>
        <taxon>Eukaryota</taxon>
        <taxon>Fungi</taxon>
        <taxon>Dikarya</taxon>
        <taxon>Basidiomycota</taxon>
        <taxon>Agaricomycotina</taxon>
        <taxon>Tremellomycetes</taxon>
        <taxon>Tremellales</taxon>
        <taxon>Cryptococcaceae</taxon>
        <taxon>Cryptococcus</taxon>
        <taxon>Cryptococcus neoformans species complex</taxon>
    </lineage>
</organism>
<keyword id="KW-0072">Autophagy</keyword>
<keyword id="KW-0968">Cytoplasmic vesicle</keyword>
<keyword id="KW-0449">Lipoprotein</keyword>
<keyword id="KW-0472">Membrane</keyword>
<keyword id="KW-0653">Protein transport</keyword>
<keyword id="KW-1185">Reference proteome</keyword>
<keyword id="KW-0813">Transport</keyword>
<keyword id="KW-0833">Ubl conjugation pathway</keyword>
<keyword id="KW-0926">Vacuole</keyword>
<name>ATG8_CRYNJ</name>